<proteinExistence type="inferred from homology"/>
<protein>
    <recommendedName>
        <fullName evidence="1">Regulator of ribonuclease activity A</fullName>
    </recommendedName>
</protein>
<keyword id="KW-0963">Cytoplasm</keyword>
<keyword id="KW-1185">Reference proteome</keyword>
<reference key="1">
    <citation type="submission" date="2008-05" db="EMBL/GenBank/DDBJ databases">
        <title>Complete sequence of Shigella boydii serotype 18 strain BS512.</title>
        <authorList>
            <person name="Rasko D.A."/>
            <person name="Rosovitz M."/>
            <person name="Maurelli A.T."/>
            <person name="Myers G."/>
            <person name="Seshadri R."/>
            <person name="Cer R."/>
            <person name="Jiang L."/>
            <person name="Ravel J."/>
            <person name="Sebastian Y."/>
        </authorList>
    </citation>
    <scope>NUCLEOTIDE SEQUENCE [LARGE SCALE GENOMIC DNA]</scope>
    <source>
        <strain>CDC 3083-94 / BS512</strain>
    </source>
</reference>
<comment type="function">
    <text evidence="1">Globally modulates RNA abundance by binding to RNase E (Rne) and regulating its endonucleolytic activity. Can modulate Rne action in a substrate-dependent manner by altering the composition of the degradosome. Modulates RNA-binding and helicase activities of the degradosome.</text>
</comment>
<comment type="subunit">
    <text evidence="1">Homotrimer. Binds to both RNA-binding sites in the C-terminal region of Rne and to RhlB.</text>
</comment>
<comment type="subcellular location">
    <subcellularLocation>
        <location evidence="1">Cytoplasm</location>
    </subcellularLocation>
</comment>
<comment type="similarity">
    <text evidence="1">Belongs to the RraA family.</text>
</comment>
<evidence type="ECO:0000255" key="1">
    <source>
        <dbReference type="HAMAP-Rule" id="MF_00471"/>
    </source>
</evidence>
<accession>B2TWC5</accession>
<gene>
    <name evidence="1" type="primary">rraA</name>
    <name type="ordered locus">SbBS512_E4411</name>
</gene>
<feature type="chain" id="PRO_1000194879" description="Regulator of ribonuclease activity A">
    <location>
        <begin position="1"/>
        <end position="161"/>
    </location>
</feature>
<sequence>MKYDTSELCDIYQEDVNVVEPLFSNFGGRASFGGQIITVKCFEDNGLLYDLLEQNGRGRVLVVDGGGSVRRALVDAELARLAVQNEWEGLVIYGAVRQVDDLEELDIGIQAMAAIPVGAAGEGIGESDVRVNFGGVTFFSGDHLYADNTGIILSEDPLDIE</sequence>
<dbReference type="EMBL" id="CP001063">
    <property type="protein sequence ID" value="ACD08376.1"/>
    <property type="molecule type" value="Genomic_DNA"/>
</dbReference>
<dbReference type="RefSeq" id="WP_000872908.1">
    <property type="nucleotide sequence ID" value="NC_010658.1"/>
</dbReference>
<dbReference type="SMR" id="B2TWC5"/>
<dbReference type="STRING" id="344609.SbBS512_E4411"/>
<dbReference type="GeneID" id="93777969"/>
<dbReference type="KEGG" id="sbc:SbBS512_E4411"/>
<dbReference type="HOGENOM" id="CLU_072626_4_0_6"/>
<dbReference type="Proteomes" id="UP000001030">
    <property type="component" value="Chromosome"/>
</dbReference>
<dbReference type="GO" id="GO:0005829">
    <property type="term" value="C:cytosol"/>
    <property type="evidence" value="ECO:0007669"/>
    <property type="project" value="TreeGrafter"/>
</dbReference>
<dbReference type="GO" id="GO:0060698">
    <property type="term" value="F:endoribonuclease inhibitor activity"/>
    <property type="evidence" value="ECO:0007669"/>
    <property type="project" value="UniProtKB-UniRule"/>
</dbReference>
<dbReference type="GO" id="GO:0019899">
    <property type="term" value="F:enzyme binding"/>
    <property type="evidence" value="ECO:0007669"/>
    <property type="project" value="UniProtKB-UniRule"/>
</dbReference>
<dbReference type="GO" id="GO:1902369">
    <property type="term" value="P:negative regulation of RNA catabolic process"/>
    <property type="evidence" value="ECO:0007669"/>
    <property type="project" value="TreeGrafter"/>
</dbReference>
<dbReference type="CDD" id="cd16841">
    <property type="entry name" value="RraA_family"/>
    <property type="match status" value="1"/>
</dbReference>
<dbReference type="FunFam" id="3.50.30.40:FF:000001">
    <property type="entry name" value="Regulator of ribonuclease activity A"/>
    <property type="match status" value="1"/>
</dbReference>
<dbReference type="Gene3D" id="3.50.30.40">
    <property type="entry name" value="Ribonuclease E inhibitor RraA/RraA-like"/>
    <property type="match status" value="1"/>
</dbReference>
<dbReference type="HAMAP" id="MF_00471">
    <property type="entry name" value="RraA"/>
    <property type="match status" value="1"/>
</dbReference>
<dbReference type="InterPro" id="IPR010203">
    <property type="entry name" value="RraA"/>
</dbReference>
<dbReference type="InterPro" id="IPR005493">
    <property type="entry name" value="RraA/RraA-like"/>
</dbReference>
<dbReference type="InterPro" id="IPR036704">
    <property type="entry name" value="RraA/RraA-like_sf"/>
</dbReference>
<dbReference type="InterPro" id="IPR014339">
    <property type="entry name" value="RraA_gpbac"/>
</dbReference>
<dbReference type="NCBIfam" id="TIGR01935">
    <property type="entry name" value="NOT-MenG"/>
    <property type="match status" value="1"/>
</dbReference>
<dbReference type="NCBIfam" id="NF006875">
    <property type="entry name" value="PRK09372.1"/>
    <property type="match status" value="1"/>
</dbReference>
<dbReference type="NCBIfam" id="TIGR02998">
    <property type="entry name" value="RraA_entero"/>
    <property type="match status" value="1"/>
</dbReference>
<dbReference type="PANTHER" id="PTHR33254">
    <property type="entry name" value="4-HYDROXY-4-METHYL-2-OXOGLUTARATE ALDOLASE 3-RELATED"/>
    <property type="match status" value="1"/>
</dbReference>
<dbReference type="PANTHER" id="PTHR33254:SF29">
    <property type="entry name" value="REGULATOR OF RIBONUCLEASE ACTIVITY A"/>
    <property type="match status" value="1"/>
</dbReference>
<dbReference type="Pfam" id="PF03737">
    <property type="entry name" value="RraA-like"/>
    <property type="match status" value="1"/>
</dbReference>
<dbReference type="SUPFAM" id="SSF89562">
    <property type="entry name" value="RraA-like"/>
    <property type="match status" value="1"/>
</dbReference>
<name>RRAA_SHIB3</name>
<organism>
    <name type="scientific">Shigella boydii serotype 18 (strain CDC 3083-94 / BS512)</name>
    <dbReference type="NCBI Taxonomy" id="344609"/>
    <lineage>
        <taxon>Bacteria</taxon>
        <taxon>Pseudomonadati</taxon>
        <taxon>Pseudomonadota</taxon>
        <taxon>Gammaproteobacteria</taxon>
        <taxon>Enterobacterales</taxon>
        <taxon>Enterobacteriaceae</taxon>
        <taxon>Shigella</taxon>
    </lineage>
</organism>